<accession>P0AC17</accession>
<accession>P31055</accession>
<accession>P76659</accession>
<protein>
    <recommendedName>
        <fullName>Dihydroneopterin aldolase</fullName>
        <shortName>DHNA</shortName>
        <ecNumber evidence="2">4.1.2.25</ecNumber>
    </recommendedName>
    <alternativeName>
        <fullName>7,8-dihydroneopterin 2'-epimerase</fullName>
    </alternativeName>
    <alternativeName>
        <fullName>7,8-dihydroneopterin aldolase</fullName>
    </alternativeName>
    <alternativeName>
        <fullName>7,8-dihydroneopterin epimerase</fullName>
        <ecNumber evidence="2">5.1.99.8</ecNumber>
    </alternativeName>
    <alternativeName>
        <fullName>Dihydroneopterin epimerase</fullName>
    </alternativeName>
</protein>
<evidence type="ECO:0000250" key="1"/>
<evidence type="ECO:0000250" key="2">
    <source>
        <dbReference type="UniProtKB" id="P0AC16"/>
    </source>
</evidence>
<evidence type="ECO:0000305" key="3"/>
<organism>
    <name type="scientific">Escherichia coli O6:H1 (strain CFT073 / ATCC 700928 / UPEC)</name>
    <dbReference type="NCBI Taxonomy" id="199310"/>
    <lineage>
        <taxon>Bacteria</taxon>
        <taxon>Pseudomonadati</taxon>
        <taxon>Pseudomonadota</taxon>
        <taxon>Gammaproteobacteria</taxon>
        <taxon>Enterobacterales</taxon>
        <taxon>Enterobacteriaceae</taxon>
        <taxon>Escherichia</taxon>
    </lineage>
</organism>
<dbReference type="EC" id="4.1.2.25" evidence="2"/>
<dbReference type="EC" id="5.1.99.8" evidence="2"/>
<dbReference type="EMBL" id="AE014075">
    <property type="protein sequence ID" value="AAN82253.1"/>
    <property type="status" value="ALT_INIT"/>
    <property type="molecule type" value="Genomic_DNA"/>
</dbReference>
<dbReference type="RefSeq" id="WP_001295541.1">
    <property type="nucleotide sequence ID" value="NZ_CP051263.1"/>
</dbReference>
<dbReference type="SMR" id="P0AC17"/>
<dbReference type="STRING" id="199310.c3808"/>
<dbReference type="GeneID" id="75173180"/>
<dbReference type="KEGG" id="ecc:c3808"/>
<dbReference type="eggNOG" id="COG1539">
    <property type="taxonomic scope" value="Bacteria"/>
</dbReference>
<dbReference type="HOGENOM" id="CLU_112632_0_2_6"/>
<dbReference type="UniPathway" id="UPA00077">
    <property type="reaction ID" value="UER00154"/>
</dbReference>
<dbReference type="Proteomes" id="UP000001410">
    <property type="component" value="Chromosome"/>
</dbReference>
<dbReference type="GO" id="GO:0005737">
    <property type="term" value="C:cytoplasm"/>
    <property type="evidence" value="ECO:0007669"/>
    <property type="project" value="TreeGrafter"/>
</dbReference>
<dbReference type="GO" id="GO:0004150">
    <property type="term" value="F:dihydroneopterin aldolase activity"/>
    <property type="evidence" value="ECO:0007669"/>
    <property type="project" value="UniProtKB-EC"/>
</dbReference>
<dbReference type="GO" id="GO:0016853">
    <property type="term" value="F:isomerase activity"/>
    <property type="evidence" value="ECO:0007669"/>
    <property type="project" value="UniProtKB-KW"/>
</dbReference>
<dbReference type="GO" id="GO:0046656">
    <property type="term" value="P:folic acid biosynthetic process"/>
    <property type="evidence" value="ECO:0007669"/>
    <property type="project" value="UniProtKB-KW"/>
</dbReference>
<dbReference type="GO" id="GO:0046654">
    <property type="term" value="P:tetrahydrofolate biosynthetic process"/>
    <property type="evidence" value="ECO:0007669"/>
    <property type="project" value="UniProtKB-UniPathway"/>
</dbReference>
<dbReference type="CDD" id="cd00534">
    <property type="entry name" value="DHNA_DHNTPE"/>
    <property type="match status" value="1"/>
</dbReference>
<dbReference type="FunFam" id="3.30.1130.10:FF:000002">
    <property type="entry name" value="7,8-dihydroneopterin aldolase"/>
    <property type="match status" value="1"/>
</dbReference>
<dbReference type="Gene3D" id="3.30.1130.10">
    <property type="match status" value="1"/>
</dbReference>
<dbReference type="InterPro" id="IPR006156">
    <property type="entry name" value="Dihydroneopterin_aldolase"/>
</dbReference>
<dbReference type="InterPro" id="IPR006157">
    <property type="entry name" value="FolB_dom"/>
</dbReference>
<dbReference type="InterPro" id="IPR043133">
    <property type="entry name" value="GTP-CH-I_C/QueF"/>
</dbReference>
<dbReference type="NCBIfam" id="TIGR00525">
    <property type="entry name" value="folB"/>
    <property type="match status" value="1"/>
</dbReference>
<dbReference type="NCBIfam" id="TIGR00526">
    <property type="entry name" value="folB_dom"/>
    <property type="match status" value="1"/>
</dbReference>
<dbReference type="NCBIfam" id="NF008614">
    <property type="entry name" value="PRK11593.1"/>
    <property type="match status" value="1"/>
</dbReference>
<dbReference type="PANTHER" id="PTHR42844">
    <property type="entry name" value="DIHYDRONEOPTERIN ALDOLASE 1-RELATED"/>
    <property type="match status" value="1"/>
</dbReference>
<dbReference type="PANTHER" id="PTHR42844:SF1">
    <property type="entry name" value="DIHYDRONEOPTERIN ALDOLASE 1-RELATED"/>
    <property type="match status" value="1"/>
</dbReference>
<dbReference type="Pfam" id="PF02152">
    <property type="entry name" value="FolB"/>
    <property type="match status" value="1"/>
</dbReference>
<dbReference type="SMART" id="SM00905">
    <property type="entry name" value="FolB"/>
    <property type="match status" value="1"/>
</dbReference>
<dbReference type="SUPFAM" id="SSF55620">
    <property type="entry name" value="Tetrahydrobiopterin biosynthesis enzymes-like"/>
    <property type="match status" value="1"/>
</dbReference>
<proteinExistence type="inferred from homology"/>
<sequence>MDIVFIEQLSVITTIGVYDWEQTIEQKLVFDIEMAWDNRKAAKSDDVADCLSYADIAETVVSHVEGARFALVERVAEEVAELLLARFNSPWVRIKLSKPGAVARAANVGVIIERGNNLKENN</sequence>
<keyword id="KW-0289">Folate biosynthesis</keyword>
<keyword id="KW-0413">Isomerase</keyword>
<keyword id="KW-0456">Lyase</keyword>
<keyword id="KW-1185">Reference proteome</keyword>
<name>FOLB_ECOL6</name>
<reference key="1">
    <citation type="journal article" date="2002" name="Proc. Natl. Acad. Sci. U.S.A.">
        <title>Extensive mosaic structure revealed by the complete genome sequence of uropathogenic Escherichia coli.</title>
        <authorList>
            <person name="Welch R.A."/>
            <person name="Burland V."/>
            <person name="Plunkett G. III"/>
            <person name="Redford P."/>
            <person name="Roesch P."/>
            <person name="Rasko D."/>
            <person name="Buckles E.L."/>
            <person name="Liou S.-R."/>
            <person name="Boutin A."/>
            <person name="Hackett J."/>
            <person name="Stroud D."/>
            <person name="Mayhew G.F."/>
            <person name="Rose D.J."/>
            <person name="Zhou S."/>
            <person name="Schwartz D.C."/>
            <person name="Perna N.T."/>
            <person name="Mobley H.L.T."/>
            <person name="Donnenberg M.S."/>
            <person name="Blattner F.R."/>
        </authorList>
    </citation>
    <scope>NUCLEOTIDE SEQUENCE [LARGE SCALE GENOMIC DNA]</scope>
    <source>
        <strain>CFT073 / ATCC 700928 / UPEC</strain>
    </source>
</reference>
<comment type="function">
    <text evidence="2">Catalyzes the conversion of 7,8-dihydroneopterin to 6-hydroxymethyl-7,8-dihydropterin. Can use L-threo-dihydroneopterin and D-erythro-dihydroneopterin as substrates for the formation of 6-hydroxymethyldihydropterin, but it can also catalyze the epimerization of carbon 2' of dihydroneopterin to dihydromonapterin at appreciable velocity.</text>
</comment>
<comment type="catalytic activity">
    <reaction evidence="2">
        <text>7,8-dihydroneopterin = 6-hydroxymethyl-7,8-dihydropterin + glycolaldehyde</text>
        <dbReference type="Rhea" id="RHEA:10540"/>
        <dbReference type="ChEBI" id="CHEBI:17001"/>
        <dbReference type="ChEBI" id="CHEBI:17071"/>
        <dbReference type="ChEBI" id="CHEBI:44841"/>
        <dbReference type="EC" id="4.1.2.25"/>
    </reaction>
</comment>
<comment type="catalytic activity">
    <reaction evidence="2">
        <text>7,8-dihydroneopterin = 7,8-dihydromonapterin</text>
        <dbReference type="Rhea" id="RHEA:45328"/>
        <dbReference type="ChEBI" id="CHEBI:17001"/>
        <dbReference type="ChEBI" id="CHEBI:71175"/>
        <dbReference type="EC" id="5.1.99.8"/>
    </reaction>
</comment>
<comment type="pathway">
    <text>Cofactor biosynthesis; tetrahydrofolate biosynthesis; 2-amino-4-hydroxy-6-hydroxymethyl-7,8-dihydropteridine diphosphate from 7,8-dihydroneopterin triphosphate: step 3/4.</text>
</comment>
<comment type="subunit">
    <text evidence="1">Homooctamer.</text>
</comment>
<comment type="similarity">
    <text evidence="3">Belongs to the DHNA family.</text>
</comment>
<comment type="sequence caution" evidence="3">
    <conflict type="erroneous initiation">
        <sequence resource="EMBL-CDS" id="AAN82253"/>
    </conflict>
    <text>Extended N-terminus.</text>
</comment>
<feature type="chain" id="PRO_0000168270" description="Dihydroneopterin aldolase">
    <location>
        <begin position="1"/>
        <end position="122"/>
    </location>
</feature>
<feature type="active site" description="Proton donor/acceptor" evidence="2">
    <location>
        <position position="98"/>
    </location>
</feature>
<feature type="binding site" evidence="2">
    <location>
        <position position="21"/>
    </location>
    <ligand>
        <name>substrate</name>
    </ligand>
</feature>
<feature type="binding site" evidence="2">
    <location>
        <position position="53"/>
    </location>
    <ligand>
        <name>substrate</name>
    </ligand>
</feature>
<feature type="binding site" evidence="2">
    <location>
        <begin position="72"/>
        <end position="73"/>
    </location>
    <ligand>
        <name>substrate</name>
    </ligand>
</feature>
<gene>
    <name type="primary">folB</name>
    <name type="ordered locus">c3808</name>
</gene>